<keyword id="KW-0963">Cytoplasm</keyword>
<keyword id="KW-0255">Endonuclease</keyword>
<keyword id="KW-0378">Hydrolase</keyword>
<keyword id="KW-0479">Metal-binding</keyword>
<keyword id="KW-0540">Nuclease</keyword>
<keyword id="KW-1185">Reference proteome</keyword>
<keyword id="KW-0690">Ribosome biogenesis</keyword>
<keyword id="KW-0698">rRNA processing</keyword>
<keyword id="KW-0862">Zinc</keyword>
<accession>Q5P762</accession>
<gene>
    <name evidence="1" type="primary">ybeY</name>
    <name type="ordered locus">AZOSEA07260</name>
    <name type="ORF">ebA1336</name>
</gene>
<reference key="1">
    <citation type="journal article" date="2005" name="Arch. Microbiol.">
        <title>The genome sequence of an anaerobic aromatic-degrading denitrifying bacterium, strain EbN1.</title>
        <authorList>
            <person name="Rabus R."/>
            <person name="Kube M."/>
            <person name="Heider J."/>
            <person name="Beck A."/>
            <person name="Heitmann K."/>
            <person name="Widdel F."/>
            <person name="Reinhardt R."/>
        </authorList>
    </citation>
    <scope>NUCLEOTIDE SEQUENCE [LARGE SCALE GENOMIC DNA]</scope>
    <source>
        <strain>DSM 19018 / LMG 30748 / EbN1</strain>
    </source>
</reference>
<evidence type="ECO:0000255" key="1">
    <source>
        <dbReference type="HAMAP-Rule" id="MF_00009"/>
    </source>
</evidence>
<name>YBEY_AROAE</name>
<organism>
    <name type="scientific">Aromatoleum aromaticum (strain DSM 19018 / LMG 30748 / EbN1)</name>
    <name type="common">Azoarcus sp. (strain EbN1)</name>
    <dbReference type="NCBI Taxonomy" id="76114"/>
    <lineage>
        <taxon>Bacteria</taxon>
        <taxon>Pseudomonadati</taxon>
        <taxon>Pseudomonadota</taxon>
        <taxon>Betaproteobacteria</taxon>
        <taxon>Rhodocyclales</taxon>
        <taxon>Rhodocyclaceae</taxon>
        <taxon>Aromatoleum</taxon>
    </lineage>
</organism>
<sequence length="154" mass="16990">MSADTETASSRLALTVQRAIGAENRARSPTSALIRRWALAALRGDAEMTVRLVGEAEGRRLNRDYRGKDYATNVLTFVYDESERLAGDLVLCVPVVAREAAEQGKPLEAHFAHLIVHGMLHLQGFDHEAPDEAEEMETLETRVLATLGYPNPYA</sequence>
<dbReference type="EC" id="3.1.-.-" evidence="1"/>
<dbReference type="EMBL" id="CR555306">
    <property type="protein sequence ID" value="CAI06849.1"/>
    <property type="molecule type" value="Genomic_DNA"/>
</dbReference>
<dbReference type="RefSeq" id="WP_011236577.1">
    <property type="nucleotide sequence ID" value="NC_006513.1"/>
</dbReference>
<dbReference type="SMR" id="Q5P762"/>
<dbReference type="STRING" id="76114.ebA1336"/>
<dbReference type="KEGG" id="eba:ebA1336"/>
<dbReference type="eggNOG" id="COG0319">
    <property type="taxonomic scope" value="Bacteria"/>
</dbReference>
<dbReference type="HOGENOM" id="CLU_106710_0_1_4"/>
<dbReference type="OrthoDB" id="9807740at2"/>
<dbReference type="Proteomes" id="UP000006552">
    <property type="component" value="Chromosome"/>
</dbReference>
<dbReference type="GO" id="GO:0005737">
    <property type="term" value="C:cytoplasm"/>
    <property type="evidence" value="ECO:0007669"/>
    <property type="project" value="UniProtKB-SubCell"/>
</dbReference>
<dbReference type="GO" id="GO:0004222">
    <property type="term" value="F:metalloendopeptidase activity"/>
    <property type="evidence" value="ECO:0007669"/>
    <property type="project" value="InterPro"/>
</dbReference>
<dbReference type="GO" id="GO:0004521">
    <property type="term" value="F:RNA endonuclease activity"/>
    <property type="evidence" value="ECO:0007669"/>
    <property type="project" value="UniProtKB-UniRule"/>
</dbReference>
<dbReference type="GO" id="GO:0008270">
    <property type="term" value="F:zinc ion binding"/>
    <property type="evidence" value="ECO:0007669"/>
    <property type="project" value="UniProtKB-UniRule"/>
</dbReference>
<dbReference type="GO" id="GO:0006364">
    <property type="term" value="P:rRNA processing"/>
    <property type="evidence" value="ECO:0007669"/>
    <property type="project" value="UniProtKB-UniRule"/>
</dbReference>
<dbReference type="Gene3D" id="3.40.390.30">
    <property type="entry name" value="Metalloproteases ('zincins'), catalytic domain"/>
    <property type="match status" value="1"/>
</dbReference>
<dbReference type="HAMAP" id="MF_00009">
    <property type="entry name" value="Endoribonucl_YbeY"/>
    <property type="match status" value="1"/>
</dbReference>
<dbReference type="InterPro" id="IPR023091">
    <property type="entry name" value="MetalPrtase_cat_dom_sf_prd"/>
</dbReference>
<dbReference type="InterPro" id="IPR002036">
    <property type="entry name" value="YbeY"/>
</dbReference>
<dbReference type="InterPro" id="IPR020549">
    <property type="entry name" value="YbeY_CS"/>
</dbReference>
<dbReference type="NCBIfam" id="TIGR00043">
    <property type="entry name" value="rRNA maturation RNase YbeY"/>
    <property type="match status" value="1"/>
</dbReference>
<dbReference type="PANTHER" id="PTHR46986">
    <property type="entry name" value="ENDORIBONUCLEASE YBEY, CHLOROPLASTIC"/>
    <property type="match status" value="1"/>
</dbReference>
<dbReference type="PANTHER" id="PTHR46986:SF1">
    <property type="entry name" value="ENDORIBONUCLEASE YBEY, CHLOROPLASTIC"/>
    <property type="match status" value="1"/>
</dbReference>
<dbReference type="Pfam" id="PF02130">
    <property type="entry name" value="YbeY"/>
    <property type="match status" value="1"/>
</dbReference>
<dbReference type="SUPFAM" id="SSF55486">
    <property type="entry name" value="Metalloproteases ('zincins'), catalytic domain"/>
    <property type="match status" value="1"/>
</dbReference>
<dbReference type="PROSITE" id="PS01306">
    <property type="entry name" value="UPF0054"/>
    <property type="match status" value="1"/>
</dbReference>
<comment type="function">
    <text evidence="1">Single strand-specific metallo-endoribonuclease involved in late-stage 70S ribosome quality control and in maturation of the 3' terminus of the 16S rRNA.</text>
</comment>
<comment type="cofactor">
    <cofactor evidence="1">
        <name>Zn(2+)</name>
        <dbReference type="ChEBI" id="CHEBI:29105"/>
    </cofactor>
    <text evidence="1">Binds 1 zinc ion.</text>
</comment>
<comment type="subcellular location">
    <subcellularLocation>
        <location evidence="1">Cytoplasm</location>
    </subcellularLocation>
</comment>
<comment type="similarity">
    <text evidence="1">Belongs to the endoribonuclease YbeY family.</text>
</comment>
<protein>
    <recommendedName>
        <fullName evidence="1">Endoribonuclease YbeY</fullName>
        <ecNumber evidence="1">3.1.-.-</ecNumber>
    </recommendedName>
</protein>
<feature type="chain" id="PRO_0000102401" description="Endoribonuclease YbeY">
    <location>
        <begin position="1"/>
        <end position="154"/>
    </location>
</feature>
<feature type="binding site" evidence="1">
    <location>
        <position position="117"/>
    </location>
    <ligand>
        <name>Zn(2+)</name>
        <dbReference type="ChEBI" id="CHEBI:29105"/>
        <note>catalytic</note>
    </ligand>
</feature>
<feature type="binding site" evidence="1">
    <location>
        <position position="121"/>
    </location>
    <ligand>
        <name>Zn(2+)</name>
        <dbReference type="ChEBI" id="CHEBI:29105"/>
        <note>catalytic</note>
    </ligand>
</feature>
<feature type="binding site" evidence="1">
    <location>
        <position position="127"/>
    </location>
    <ligand>
        <name>Zn(2+)</name>
        <dbReference type="ChEBI" id="CHEBI:29105"/>
        <note>catalytic</note>
    </ligand>
</feature>
<proteinExistence type="inferred from homology"/>